<reference key="1">
    <citation type="journal article" date="2007" name="ISME J.">
        <title>Population level functional diversity in a microbial community revealed by comparative genomic and metagenomic analyses.</title>
        <authorList>
            <person name="Bhaya D."/>
            <person name="Grossman A.R."/>
            <person name="Steunou A.-S."/>
            <person name="Khuri N."/>
            <person name="Cohan F.M."/>
            <person name="Hamamura N."/>
            <person name="Melendrez M.C."/>
            <person name="Bateson M.M."/>
            <person name="Ward D.M."/>
            <person name="Heidelberg J.F."/>
        </authorList>
    </citation>
    <scope>NUCLEOTIDE SEQUENCE [LARGE SCALE GENOMIC DNA]</scope>
    <source>
        <strain>JA-2-3B'a(2-13)</strain>
    </source>
</reference>
<dbReference type="EMBL" id="CP000240">
    <property type="protein sequence ID" value="ABD03491.1"/>
    <property type="molecule type" value="Genomic_DNA"/>
</dbReference>
<dbReference type="RefSeq" id="WP_011434118.1">
    <property type="nucleotide sequence ID" value="NC_007776.1"/>
</dbReference>
<dbReference type="SMR" id="Q2JIQ7"/>
<dbReference type="STRING" id="321332.CYB_2559"/>
<dbReference type="KEGG" id="cyb:CYB_2559"/>
<dbReference type="eggNOG" id="COG1381">
    <property type="taxonomic scope" value="Bacteria"/>
</dbReference>
<dbReference type="HOGENOM" id="CLU_066632_0_0_3"/>
<dbReference type="OrthoDB" id="9797083at2"/>
<dbReference type="Proteomes" id="UP000001938">
    <property type="component" value="Chromosome"/>
</dbReference>
<dbReference type="GO" id="GO:0043590">
    <property type="term" value="C:bacterial nucleoid"/>
    <property type="evidence" value="ECO:0007669"/>
    <property type="project" value="TreeGrafter"/>
</dbReference>
<dbReference type="GO" id="GO:0006310">
    <property type="term" value="P:DNA recombination"/>
    <property type="evidence" value="ECO:0007669"/>
    <property type="project" value="UniProtKB-UniRule"/>
</dbReference>
<dbReference type="GO" id="GO:0006302">
    <property type="term" value="P:double-strand break repair"/>
    <property type="evidence" value="ECO:0007669"/>
    <property type="project" value="TreeGrafter"/>
</dbReference>
<dbReference type="Gene3D" id="2.40.50.140">
    <property type="entry name" value="Nucleic acid-binding proteins"/>
    <property type="match status" value="1"/>
</dbReference>
<dbReference type="Gene3D" id="1.20.1440.120">
    <property type="entry name" value="Recombination protein O, C-terminal domain"/>
    <property type="match status" value="1"/>
</dbReference>
<dbReference type="HAMAP" id="MF_00201">
    <property type="entry name" value="RecO"/>
    <property type="match status" value="1"/>
</dbReference>
<dbReference type="InterPro" id="IPR037278">
    <property type="entry name" value="ARFGAP/RecO"/>
</dbReference>
<dbReference type="InterPro" id="IPR022572">
    <property type="entry name" value="DNA_rep/recomb_RecO_N"/>
</dbReference>
<dbReference type="InterPro" id="IPR012340">
    <property type="entry name" value="NA-bd_OB-fold"/>
</dbReference>
<dbReference type="InterPro" id="IPR003717">
    <property type="entry name" value="RecO"/>
</dbReference>
<dbReference type="InterPro" id="IPR042242">
    <property type="entry name" value="RecO_C"/>
</dbReference>
<dbReference type="NCBIfam" id="TIGR00613">
    <property type="entry name" value="reco"/>
    <property type="match status" value="1"/>
</dbReference>
<dbReference type="PANTHER" id="PTHR33991">
    <property type="entry name" value="DNA REPAIR PROTEIN RECO"/>
    <property type="match status" value="1"/>
</dbReference>
<dbReference type="PANTHER" id="PTHR33991:SF1">
    <property type="entry name" value="DNA REPAIR PROTEIN RECO"/>
    <property type="match status" value="1"/>
</dbReference>
<dbReference type="Pfam" id="PF02565">
    <property type="entry name" value="RecO_C"/>
    <property type="match status" value="1"/>
</dbReference>
<dbReference type="Pfam" id="PF11967">
    <property type="entry name" value="RecO_N"/>
    <property type="match status" value="1"/>
</dbReference>
<dbReference type="SUPFAM" id="SSF57863">
    <property type="entry name" value="ArfGap/RecO-like zinc finger"/>
    <property type="match status" value="1"/>
</dbReference>
<dbReference type="SUPFAM" id="SSF50249">
    <property type="entry name" value="Nucleic acid-binding proteins"/>
    <property type="match status" value="1"/>
</dbReference>
<proteinExistence type="inferred from homology"/>
<comment type="function">
    <text evidence="1">Involved in DNA repair and RecF pathway recombination.</text>
</comment>
<comment type="similarity">
    <text evidence="1">Belongs to the RecO family.</text>
</comment>
<sequence length="285" mass="31166">MSGRTYRVTGINLKGIPLGEADRIVTILTREQGLIRAVAKGSRKQPSKLGGRMEPFVINDLLMVRGRWSAQTETSQRLQRIVQAETLQTFPRLSRSLAHLTAAQYLAEVALLLALPDQAQEELFVVLVEHLERIERAASEQAVLPLLTHGLYHLLALAGFAPQVQACYFCQGGLVGSVFFSPQWGGLICDPCRVAQRPSPIAWVSASALRALGSLPSSTLPLPEDSLPLAAWLEAERLLRRVLEHHTDREIRSAELLASCYAVPTANGQGSPAFPEGHPEKWASA</sequence>
<feature type="chain" id="PRO_0000264851" description="DNA repair protein RecO">
    <location>
        <begin position="1"/>
        <end position="285"/>
    </location>
</feature>
<evidence type="ECO:0000255" key="1">
    <source>
        <dbReference type="HAMAP-Rule" id="MF_00201"/>
    </source>
</evidence>
<keyword id="KW-0227">DNA damage</keyword>
<keyword id="KW-0233">DNA recombination</keyword>
<keyword id="KW-0234">DNA repair</keyword>
<keyword id="KW-1185">Reference proteome</keyword>
<name>RECO_SYNJB</name>
<organism>
    <name type="scientific">Synechococcus sp. (strain JA-2-3B'a(2-13))</name>
    <name type="common">Cyanobacteria bacterium Yellowstone B-Prime</name>
    <dbReference type="NCBI Taxonomy" id="321332"/>
    <lineage>
        <taxon>Bacteria</taxon>
        <taxon>Bacillati</taxon>
        <taxon>Cyanobacteriota</taxon>
        <taxon>Cyanophyceae</taxon>
        <taxon>Synechococcales</taxon>
        <taxon>Synechococcaceae</taxon>
        <taxon>Synechococcus</taxon>
    </lineage>
</organism>
<gene>
    <name evidence="1" type="primary">recO</name>
    <name type="ordered locus">CYB_2559</name>
</gene>
<accession>Q2JIQ7</accession>
<protein>
    <recommendedName>
        <fullName evidence="1">DNA repair protein RecO</fullName>
    </recommendedName>
    <alternativeName>
        <fullName evidence="1">Recombination protein O</fullName>
    </alternativeName>
</protein>